<comment type="function">
    <text evidence="4 5">Odorant receptor which mediates acceptance or avoidance behavior, depending on its substrates. The odorant receptor repertoire encodes a large collection of odor stimuli that vary widely in identity, intensity, and duration. May form a complex with Orco to form odorant-sensing units, providing sensitive and prolonged odorant signaling and calcium permeability.</text>
</comment>
<comment type="subunit">
    <text evidence="1">Interacts with Orco. Complexes exist early in the endomembrane system in olfactory sensory neurons (OSNs), coupling these complexes to the conserved ciliary trafficking pathway (By similarity).</text>
</comment>
<comment type="subcellular location">
    <subcellularLocation>
        <location evidence="1">Cell membrane</location>
        <topology evidence="1">Multi-pass membrane protein</topology>
    </subcellularLocation>
</comment>
<comment type="tissue specificity">
    <text evidence="3">Expressed in olfactory sensory neurons in the antenna.</text>
</comment>
<comment type="miscellaneous">
    <text>The atypical heteromeric and topological design of the odorant receptors appears to be an insect-specific solution for odor recognition, making the OR/Orco complex an attractive target for the development of highly selective insect repellents to disrupt olfactory-mediated host-seeking behaviors of insect disease vectors. Odor-evoked OR currents are independent of known G-protein-coupled second messenger pathways.</text>
</comment>
<comment type="similarity">
    <text evidence="6">Belongs to the insect chemoreceptor superfamily. Heteromeric odorant receptor channel (TC 1.A.69) family. Or1a subfamily.</text>
</comment>
<sequence>MGRLFQLQEYCLRAMGHKDDMDSTDSTALSLKHISSLIFVISAQYPLISYVAYNRNDMEKVTACLSVVFTNMLTVIKISTFLANRKDFWEMIHRFRKMHEQSASHIPRYREGLDYVAEANKLASFLGRAYCVSCGLTGLYFMLGPIVKIGVCRWHGTTCDKELPMPMKFPFNDLESPGYEVCFLYTVLVTVVVVAYASAVDGLFISFAINLRAHFQTLQRQIENWEFPSSEPDTQIRLKSIVEYHVLLLSLSRKLRSIYTPTVMGQFVITSLQVGVIIYQLVTNMDSVMDLLLYASFFGSIMLQLFIYCYGGEIIKAESLQVDTAVRLSNWHLASPKTRTSLSLIILQSQKEVLIRAGFFVASLANFVGICRTALSLITLIKSIE</sequence>
<dbReference type="EMBL" id="AE014297">
    <property type="protein sequence ID" value="AAN13335.1"/>
    <property type="molecule type" value="Genomic_DNA"/>
</dbReference>
<dbReference type="RefSeq" id="NP_730794.1">
    <property type="nucleotide sequence ID" value="NM_164323.1"/>
</dbReference>
<dbReference type="SMR" id="P82986"/>
<dbReference type="FunCoup" id="P82986">
    <property type="interactions" value="6"/>
</dbReference>
<dbReference type="STRING" id="7227.FBpp0078616"/>
<dbReference type="PaxDb" id="7227-FBpp0078616"/>
<dbReference type="EnsemblMetazoa" id="FBtr0078977">
    <property type="protein sequence ID" value="FBpp0078616"/>
    <property type="gene ID" value="FBgn0041621"/>
</dbReference>
<dbReference type="GeneID" id="318778"/>
<dbReference type="KEGG" id="dme:Dmel_CG31519"/>
<dbReference type="AGR" id="FB:FBgn0041621"/>
<dbReference type="CTD" id="318778"/>
<dbReference type="FlyBase" id="FBgn0041621">
    <property type="gene designation" value="Or82a"/>
</dbReference>
<dbReference type="VEuPathDB" id="VectorBase:FBgn0041621"/>
<dbReference type="eggNOG" id="ENOG502SSPN">
    <property type="taxonomic scope" value="Eukaryota"/>
</dbReference>
<dbReference type="GeneTree" id="ENSGT00940000168837"/>
<dbReference type="HOGENOM" id="CLU_033399_7_1_1"/>
<dbReference type="InParanoid" id="P82986"/>
<dbReference type="OMA" id="LQEYCLR"/>
<dbReference type="OrthoDB" id="6617147at2759"/>
<dbReference type="PhylomeDB" id="P82986"/>
<dbReference type="BioGRID-ORCS" id="318778">
    <property type="hits" value="0 hits in 1 CRISPR screen"/>
</dbReference>
<dbReference type="GenomeRNAi" id="318778"/>
<dbReference type="PRO" id="PR:P82986"/>
<dbReference type="Proteomes" id="UP000000803">
    <property type="component" value="Chromosome 3R"/>
</dbReference>
<dbReference type="Bgee" id="FBgn0041621">
    <property type="expression patterns" value="Expressed in antennal basiconic sensillum ab5 (Drosophila) and 4 other cell types or tissues"/>
</dbReference>
<dbReference type="ExpressionAtlas" id="P82986">
    <property type="expression patterns" value="baseline and differential"/>
</dbReference>
<dbReference type="GO" id="GO:0032590">
    <property type="term" value="C:dendrite membrane"/>
    <property type="evidence" value="ECO:0000250"/>
    <property type="project" value="FlyBase"/>
</dbReference>
<dbReference type="GO" id="GO:0005615">
    <property type="term" value="C:extracellular space"/>
    <property type="evidence" value="ECO:0007005"/>
    <property type="project" value="FlyBase"/>
</dbReference>
<dbReference type="GO" id="GO:0005886">
    <property type="term" value="C:plasma membrane"/>
    <property type="evidence" value="ECO:0007005"/>
    <property type="project" value="FlyBase"/>
</dbReference>
<dbReference type="GO" id="GO:0170020">
    <property type="term" value="F:ionotropic olfactory receptor activity"/>
    <property type="evidence" value="ECO:0007005"/>
    <property type="project" value="FlyBase"/>
</dbReference>
<dbReference type="GO" id="GO:0005549">
    <property type="term" value="F:odorant binding"/>
    <property type="evidence" value="ECO:0000250"/>
    <property type="project" value="FlyBase"/>
</dbReference>
<dbReference type="GO" id="GO:0004984">
    <property type="term" value="F:olfactory receptor activity"/>
    <property type="evidence" value="ECO:0000318"/>
    <property type="project" value="GO_Central"/>
</dbReference>
<dbReference type="GO" id="GO:0050911">
    <property type="term" value="P:detection of chemical stimulus involved in sensory perception of smell"/>
    <property type="evidence" value="ECO:0007005"/>
    <property type="project" value="FlyBase"/>
</dbReference>
<dbReference type="GO" id="GO:0019953">
    <property type="term" value="P:sexual reproduction"/>
    <property type="evidence" value="ECO:0007007"/>
    <property type="project" value="FlyBase"/>
</dbReference>
<dbReference type="GO" id="GO:0007165">
    <property type="term" value="P:signal transduction"/>
    <property type="evidence" value="ECO:0007669"/>
    <property type="project" value="UniProtKB-KW"/>
</dbReference>
<dbReference type="InterPro" id="IPR004117">
    <property type="entry name" value="7tm6_olfct_rcpt"/>
</dbReference>
<dbReference type="PANTHER" id="PTHR21137">
    <property type="entry name" value="ODORANT RECEPTOR"/>
    <property type="match status" value="1"/>
</dbReference>
<dbReference type="PANTHER" id="PTHR21137:SF43">
    <property type="entry name" value="ODORANT RECEPTOR 47A-RELATED"/>
    <property type="match status" value="1"/>
</dbReference>
<dbReference type="Pfam" id="PF02949">
    <property type="entry name" value="7tm_6"/>
    <property type="match status" value="1"/>
</dbReference>
<feature type="chain" id="PRO_0000174270" description="Odorant receptor 82a">
    <location>
        <begin position="1"/>
        <end position="385"/>
    </location>
</feature>
<feature type="topological domain" description="Cytoplasmic" evidence="2">
    <location>
        <begin position="1"/>
        <end position="32"/>
    </location>
</feature>
<feature type="transmembrane region" description="Helical; Name=1" evidence="2">
    <location>
        <begin position="33"/>
        <end position="53"/>
    </location>
</feature>
<feature type="topological domain" description="Extracellular" evidence="2">
    <location>
        <begin position="54"/>
        <end position="62"/>
    </location>
</feature>
<feature type="transmembrane region" description="Helical; Name=2" evidence="2">
    <location>
        <begin position="63"/>
        <end position="83"/>
    </location>
</feature>
<feature type="topological domain" description="Cytoplasmic" evidence="2">
    <location>
        <begin position="84"/>
        <end position="131"/>
    </location>
</feature>
<feature type="transmembrane region" description="Helical; Name=3" evidence="2">
    <location>
        <begin position="132"/>
        <end position="152"/>
    </location>
</feature>
<feature type="topological domain" description="Extracellular" evidence="2">
    <location>
        <begin position="153"/>
        <end position="186"/>
    </location>
</feature>
<feature type="transmembrane region" description="Helical; Name=4" evidence="2">
    <location>
        <begin position="187"/>
        <end position="207"/>
    </location>
</feature>
<feature type="topological domain" description="Cytoplasmic" evidence="2">
    <location>
        <begin position="208"/>
        <end position="257"/>
    </location>
</feature>
<feature type="transmembrane region" description="Helical; Name=5" evidence="2">
    <location>
        <begin position="258"/>
        <end position="278"/>
    </location>
</feature>
<feature type="topological domain" description="Extracellular" evidence="2">
    <location>
        <begin position="279"/>
        <end position="290"/>
    </location>
</feature>
<feature type="transmembrane region" description="Helical; Name=6" evidence="2">
    <location>
        <begin position="291"/>
        <end position="311"/>
    </location>
</feature>
<feature type="topological domain" description="Cytoplasmic" evidence="2">
    <location>
        <begin position="312"/>
        <end position="357"/>
    </location>
</feature>
<feature type="transmembrane region" description="Helical; Name=7" evidence="2">
    <location>
        <begin position="358"/>
        <end position="378"/>
    </location>
</feature>
<feature type="topological domain" description="Extracellular" evidence="2">
    <location>
        <begin position="379"/>
        <end position="385"/>
    </location>
</feature>
<proteinExistence type="evidence at transcript level"/>
<name>OR82A_DROME</name>
<evidence type="ECO:0000250" key="1"/>
<evidence type="ECO:0000255" key="2"/>
<evidence type="ECO:0000269" key="3">
    <source>
    </source>
</evidence>
<evidence type="ECO:0000269" key="4">
    <source>
    </source>
</evidence>
<evidence type="ECO:0000269" key="5">
    <source>
    </source>
</evidence>
<evidence type="ECO:0000305" key="6"/>
<accession>P82986</accession>
<protein>
    <recommendedName>
        <fullName>Odorant receptor 82a</fullName>
    </recommendedName>
</protein>
<organism>
    <name type="scientific">Drosophila melanogaster</name>
    <name type="common">Fruit fly</name>
    <dbReference type="NCBI Taxonomy" id="7227"/>
    <lineage>
        <taxon>Eukaryota</taxon>
        <taxon>Metazoa</taxon>
        <taxon>Ecdysozoa</taxon>
        <taxon>Arthropoda</taxon>
        <taxon>Hexapoda</taxon>
        <taxon>Insecta</taxon>
        <taxon>Pterygota</taxon>
        <taxon>Neoptera</taxon>
        <taxon>Endopterygota</taxon>
        <taxon>Diptera</taxon>
        <taxon>Brachycera</taxon>
        <taxon>Muscomorpha</taxon>
        <taxon>Ephydroidea</taxon>
        <taxon>Drosophilidae</taxon>
        <taxon>Drosophila</taxon>
        <taxon>Sophophora</taxon>
    </lineage>
</organism>
<reference key="1">
    <citation type="journal article" date="2000" name="Science">
        <title>The genome sequence of Drosophila melanogaster.</title>
        <authorList>
            <person name="Adams M.D."/>
            <person name="Celniker S.E."/>
            <person name="Holt R.A."/>
            <person name="Evans C.A."/>
            <person name="Gocayne J.D."/>
            <person name="Amanatides P.G."/>
            <person name="Scherer S.E."/>
            <person name="Li P.W."/>
            <person name="Hoskins R.A."/>
            <person name="Galle R.F."/>
            <person name="George R.A."/>
            <person name="Lewis S.E."/>
            <person name="Richards S."/>
            <person name="Ashburner M."/>
            <person name="Henderson S.N."/>
            <person name="Sutton G.G."/>
            <person name="Wortman J.R."/>
            <person name="Yandell M.D."/>
            <person name="Zhang Q."/>
            <person name="Chen L.X."/>
            <person name="Brandon R.C."/>
            <person name="Rogers Y.-H.C."/>
            <person name="Blazej R.G."/>
            <person name="Champe M."/>
            <person name="Pfeiffer B.D."/>
            <person name="Wan K.H."/>
            <person name="Doyle C."/>
            <person name="Baxter E.G."/>
            <person name="Helt G."/>
            <person name="Nelson C.R."/>
            <person name="Miklos G.L.G."/>
            <person name="Abril J.F."/>
            <person name="Agbayani A."/>
            <person name="An H.-J."/>
            <person name="Andrews-Pfannkoch C."/>
            <person name="Baldwin D."/>
            <person name="Ballew R.M."/>
            <person name="Basu A."/>
            <person name="Baxendale J."/>
            <person name="Bayraktaroglu L."/>
            <person name="Beasley E.M."/>
            <person name="Beeson K.Y."/>
            <person name="Benos P.V."/>
            <person name="Berman B.P."/>
            <person name="Bhandari D."/>
            <person name="Bolshakov S."/>
            <person name="Borkova D."/>
            <person name="Botchan M.R."/>
            <person name="Bouck J."/>
            <person name="Brokstein P."/>
            <person name="Brottier P."/>
            <person name="Burtis K.C."/>
            <person name="Busam D.A."/>
            <person name="Butler H."/>
            <person name="Cadieu E."/>
            <person name="Center A."/>
            <person name="Chandra I."/>
            <person name="Cherry J.M."/>
            <person name="Cawley S."/>
            <person name="Dahlke C."/>
            <person name="Davenport L.B."/>
            <person name="Davies P."/>
            <person name="de Pablos B."/>
            <person name="Delcher A."/>
            <person name="Deng Z."/>
            <person name="Mays A.D."/>
            <person name="Dew I."/>
            <person name="Dietz S.M."/>
            <person name="Dodson K."/>
            <person name="Doup L.E."/>
            <person name="Downes M."/>
            <person name="Dugan-Rocha S."/>
            <person name="Dunkov B.C."/>
            <person name="Dunn P."/>
            <person name="Durbin K.J."/>
            <person name="Evangelista C.C."/>
            <person name="Ferraz C."/>
            <person name="Ferriera S."/>
            <person name="Fleischmann W."/>
            <person name="Fosler C."/>
            <person name="Gabrielian A.E."/>
            <person name="Garg N.S."/>
            <person name="Gelbart W.M."/>
            <person name="Glasser K."/>
            <person name="Glodek A."/>
            <person name="Gong F."/>
            <person name="Gorrell J.H."/>
            <person name="Gu Z."/>
            <person name="Guan P."/>
            <person name="Harris M."/>
            <person name="Harris N.L."/>
            <person name="Harvey D.A."/>
            <person name="Heiman T.J."/>
            <person name="Hernandez J.R."/>
            <person name="Houck J."/>
            <person name="Hostin D."/>
            <person name="Houston K.A."/>
            <person name="Howland T.J."/>
            <person name="Wei M.-H."/>
            <person name="Ibegwam C."/>
            <person name="Jalali M."/>
            <person name="Kalush F."/>
            <person name="Karpen G.H."/>
            <person name="Ke Z."/>
            <person name="Kennison J.A."/>
            <person name="Ketchum K.A."/>
            <person name="Kimmel B.E."/>
            <person name="Kodira C.D."/>
            <person name="Kraft C.L."/>
            <person name="Kravitz S."/>
            <person name="Kulp D."/>
            <person name="Lai Z."/>
            <person name="Lasko P."/>
            <person name="Lei Y."/>
            <person name="Levitsky A.A."/>
            <person name="Li J.H."/>
            <person name="Li Z."/>
            <person name="Liang Y."/>
            <person name="Lin X."/>
            <person name="Liu X."/>
            <person name="Mattei B."/>
            <person name="McIntosh T.C."/>
            <person name="McLeod M.P."/>
            <person name="McPherson D."/>
            <person name="Merkulov G."/>
            <person name="Milshina N.V."/>
            <person name="Mobarry C."/>
            <person name="Morris J."/>
            <person name="Moshrefi A."/>
            <person name="Mount S.M."/>
            <person name="Moy M."/>
            <person name="Murphy B."/>
            <person name="Murphy L."/>
            <person name="Muzny D.M."/>
            <person name="Nelson D.L."/>
            <person name="Nelson D.R."/>
            <person name="Nelson K.A."/>
            <person name="Nixon K."/>
            <person name="Nusskern D.R."/>
            <person name="Pacleb J.M."/>
            <person name="Palazzolo M."/>
            <person name="Pittman G.S."/>
            <person name="Pan S."/>
            <person name="Pollard J."/>
            <person name="Puri V."/>
            <person name="Reese M.G."/>
            <person name="Reinert K."/>
            <person name="Remington K."/>
            <person name="Saunders R.D.C."/>
            <person name="Scheeler F."/>
            <person name="Shen H."/>
            <person name="Shue B.C."/>
            <person name="Siden-Kiamos I."/>
            <person name="Simpson M."/>
            <person name="Skupski M.P."/>
            <person name="Smith T.J."/>
            <person name="Spier E."/>
            <person name="Spradling A.C."/>
            <person name="Stapleton M."/>
            <person name="Strong R."/>
            <person name="Sun E."/>
            <person name="Svirskas R."/>
            <person name="Tector C."/>
            <person name="Turner R."/>
            <person name="Venter E."/>
            <person name="Wang A.H."/>
            <person name="Wang X."/>
            <person name="Wang Z.-Y."/>
            <person name="Wassarman D.A."/>
            <person name="Weinstock G.M."/>
            <person name="Weissenbach J."/>
            <person name="Williams S.M."/>
            <person name="Woodage T."/>
            <person name="Worley K.C."/>
            <person name="Wu D."/>
            <person name="Yang S."/>
            <person name="Yao Q.A."/>
            <person name="Ye J."/>
            <person name="Yeh R.-F."/>
            <person name="Zaveri J.S."/>
            <person name="Zhan M."/>
            <person name="Zhang G."/>
            <person name="Zhao Q."/>
            <person name="Zheng L."/>
            <person name="Zheng X.H."/>
            <person name="Zhong F.N."/>
            <person name="Zhong W."/>
            <person name="Zhou X."/>
            <person name="Zhu S.C."/>
            <person name="Zhu X."/>
            <person name="Smith H.O."/>
            <person name="Gibbs R.A."/>
            <person name="Myers E.W."/>
            <person name="Rubin G.M."/>
            <person name="Venter J.C."/>
        </authorList>
    </citation>
    <scope>NUCLEOTIDE SEQUENCE [LARGE SCALE GENOMIC DNA]</scope>
    <source>
        <strain>Berkeley</strain>
    </source>
</reference>
<reference key="2">
    <citation type="journal article" date="2002" name="Genome Biol.">
        <title>Annotation of the Drosophila melanogaster euchromatic genome: a systematic review.</title>
        <authorList>
            <person name="Misra S."/>
            <person name="Crosby M.A."/>
            <person name="Mungall C.J."/>
            <person name="Matthews B.B."/>
            <person name="Campbell K.S."/>
            <person name="Hradecky P."/>
            <person name="Huang Y."/>
            <person name="Kaminker J.S."/>
            <person name="Millburn G.H."/>
            <person name="Prochnik S.E."/>
            <person name="Smith C.D."/>
            <person name="Tupy J.L."/>
            <person name="Whitfield E.J."/>
            <person name="Bayraktaroglu L."/>
            <person name="Berman B.P."/>
            <person name="Bettencourt B.R."/>
            <person name="Celniker S.E."/>
            <person name="de Grey A.D.N.J."/>
            <person name="Drysdale R.A."/>
            <person name="Harris N.L."/>
            <person name="Richter J."/>
            <person name="Russo S."/>
            <person name="Schroeder A.J."/>
            <person name="Shu S.Q."/>
            <person name="Stapleton M."/>
            <person name="Yamada C."/>
            <person name="Ashburner M."/>
            <person name="Gelbart W.M."/>
            <person name="Rubin G.M."/>
            <person name="Lewis S.E."/>
        </authorList>
    </citation>
    <scope>GENOME REANNOTATION</scope>
    <source>
        <strain>Berkeley</strain>
    </source>
</reference>
<reference key="3">
    <citation type="journal article" date="2000" name="Cell">
        <title>An olfactory sensory map in the fly brain.</title>
        <authorList>
            <person name="Vosshall L.B."/>
            <person name="Wong A.M."/>
            <person name="Axel R."/>
        </authorList>
    </citation>
    <scope>TISSUE SPECIFICITY</scope>
</reference>
<reference key="4">
    <citation type="journal article" date="2006" name="Cell">
        <title>Coding of odors by a receptor repertoire.</title>
        <authorList>
            <person name="Hallem E.A."/>
            <person name="Carlson J.R."/>
        </authorList>
    </citation>
    <scope>FUNCTION</scope>
</reference>
<reference key="5">
    <citation type="journal article" date="2011" name="J. Neurosci.">
        <title>Similar odorants elicit different behavioral and physiological responses, some supersustained.</title>
        <authorList>
            <person name="Montague S.A."/>
            <person name="Mathew D."/>
            <person name="Carlson J.R."/>
        </authorList>
    </citation>
    <scope>FUNCTION</scope>
</reference>
<gene>
    <name type="primary">Or82a</name>
    <name type="ORF">CG31519</name>
</gene>
<keyword id="KW-1003">Cell membrane</keyword>
<keyword id="KW-0472">Membrane</keyword>
<keyword id="KW-0552">Olfaction</keyword>
<keyword id="KW-0675">Receptor</keyword>
<keyword id="KW-1185">Reference proteome</keyword>
<keyword id="KW-0716">Sensory transduction</keyword>
<keyword id="KW-0807">Transducer</keyword>
<keyword id="KW-0812">Transmembrane</keyword>
<keyword id="KW-1133">Transmembrane helix</keyword>